<evidence type="ECO:0000250" key="1">
    <source>
        <dbReference type="UniProtKB" id="Q60575"/>
    </source>
</evidence>
<evidence type="ECO:0000255" key="2"/>
<evidence type="ECO:0000255" key="3">
    <source>
        <dbReference type="PROSITE-ProRule" id="PRU00145"/>
    </source>
</evidence>
<evidence type="ECO:0000255" key="4">
    <source>
        <dbReference type="PROSITE-ProRule" id="PRU00283"/>
    </source>
</evidence>
<evidence type="ECO:0000256" key="5">
    <source>
        <dbReference type="SAM" id="MobiDB-lite"/>
    </source>
</evidence>
<evidence type="ECO:0000269" key="6">
    <source>
    </source>
</evidence>
<evidence type="ECO:0000269" key="7">
    <source>
    </source>
</evidence>
<evidence type="ECO:0000269" key="8">
    <source>
    </source>
</evidence>
<evidence type="ECO:0000303" key="9">
    <source>
    </source>
</evidence>
<evidence type="ECO:0000305" key="10"/>
<evidence type="ECO:0000312" key="11">
    <source>
        <dbReference type="EMBL" id="AAF74192.1"/>
    </source>
</evidence>
<comment type="function">
    <text evidence="6 8">Required for presynaptic maturation, has a role in axonal transport of dense-core vesicles carrying synaptic vesicle precursors, components required for the morphological transformation of axonal growth cones to mature boutons.</text>
</comment>
<comment type="subunit">
    <text evidence="1 8">Monomer (By similarity). Interacts with Arl8 (PubMed:30174114).</text>
</comment>
<comment type="subcellular location">
    <subcellularLocation>
        <location evidence="6">Cytoplasm</location>
        <location evidence="6">Cytoskeleton</location>
    </subcellularLocation>
    <subcellularLocation>
        <location evidence="8">Cell projection</location>
        <location evidence="8">Axon</location>
    </subcellularLocation>
    <text evidence="6">Microtubule-associated.</text>
</comment>
<comment type="alternative products">
    <event type="alternative splicing"/>
    <isoform>
        <id>A1ZAJ2-1</id>
        <name>B</name>
        <name>C</name>
        <sequence type="displayed"/>
    </isoform>
    <isoform>
        <id>A1ZAJ2-2</id>
        <name>D</name>
        <sequence type="described" ref="VSP_030269"/>
    </isoform>
    <isoform>
        <id>A1ZAJ2-3</id>
        <name>E</name>
        <sequence type="described" ref="VSP_030268"/>
    </isoform>
</comment>
<comment type="tissue specificity">
    <text evidence="6">Expressed in muscles.</text>
</comment>
<comment type="disruption phenotype">
    <text evidence="6">Flies prevent nerve endings from transforming to synaptic boutons: growth cones become constricted but remain within contact fields as thin processes that lack varicosities or boutons. Mutant embryos die at late stage, they are paralyzed and lacked the coordinated muscle peristalsis required for hatching.</text>
</comment>
<comment type="similarity">
    <text evidence="4">Belongs to the TRAFAC class myosin-kinesin ATPase superfamily. Kinesin family. Unc-104 subfamily.</text>
</comment>
<organism>
    <name type="scientific">Drosophila melanogaster</name>
    <name type="common">Fruit fly</name>
    <dbReference type="NCBI Taxonomy" id="7227"/>
    <lineage>
        <taxon>Eukaryota</taxon>
        <taxon>Metazoa</taxon>
        <taxon>Ecdysozoa</taxon>
        <taxon>Arthropoda</taxon>
        <taxon>Hexapoda</taxon>
        <taxon>Insecta</taxon>
        <taxon>Pterygota</taxon>
        <taxon>Neoptera</taxon>
        <taxon>Endopterygota</taxon>
        <taxon>Diptera</taxon>
        <taxon>Brachycera</taxon>
        <taxon>Muscomorpha</taxon>
        <taxon>Ephydroidea</taxon>
        <taxon>Drosophilidae</taxon>
        <taxon>Drosophila</taxon>
        <taxon>Sophophora</taxon>
    </lineage>
</organism>
<protein>
    <recommendedName>
        <fullName>Kinesin-like protein unc-104</fullName>
    </recommendedName>
    <alternativeName>
        <fullName>Protein immaculate connections</fullName>
        <shortName>DUnc104</shortName>
    </alternativeName>
</protein>
<gene>
    <name type="primary">unc-104</name>
    <name evidence="9" type="synonym">imac</name>
    <name type="ORF">CG8566</name>
</gene>
<dbReference type="EMBL" id="AF247761">
    <property type="protein sequence ID" value="AAF74192.1"/>
    <property type="molecule type" value="mRNA"/>
</dbReference>
<dbReference type="EMBL" id="AE013599">
    <property type="protein sequence ID" value="AAF57957.3"/>
    <property type="molecule type" value="Genomic_DNA"/>
</dbReference>
<dbReference type="EMBL" id="AE013599">
    <property type="protein sequence ID" value="AAM70884.2"/>
    <property type="molecule type" value="Genomic_DNA"/>
</dbReference>
<dbReference type="EMBL" id="AE013599">
    <property type="protein sequence ID" value="AAM70886.2"/>
    <property type="molecule type" value="Genomic_DNA"/>
</dbReference>
<dbReference type="EMBL" id="AE013599">
    <property type="protein sequence ID" value="ABV53825.1"/>
    <property type="molecule type" value="Genomic_DNA"/>
</dbReference>
<dbReference type="RefSeq" id="NP_001097346.1">
    <molecule id="A1ZAJ2-3"/>
    <property type="nucleotide sequence ID" value="NM_001103876.3"/>
</dbReference>
<dbReference type="RefSeq" id="NP_611155.3">
    <molecule id="A1ZAJ2-2"/>
    <property type="nucleotide sequence ID" value="NM_137311.5"/>
</dbReference>
<dbReference type="RefSeq" id="NP_725607.2">
    <molecule id="A1ZAJ2-1"/>
    <property type="nucleotide sequence ID" value="NM_166190.4"/>
</dbReference>
<dbReference type="RefSeq" id="NP_725610.2">
    <molecule id="A1ZAJ2-1"/>
    <property type="nucleotide sequence ID" value="NM_166192.4"/>
</dbReference>
<dbReference type="SMR" id="A1ZAJ2"/>
<dbReference type="BioGRID" id="62585">
    <property type="interactions" value="7"/>
</dbReference>
<dbReference type="FunCoup" id="A1ZAJ2">
    <property type="interactions" value="174"/>
</dbReference>
<dbReference type="IntAct" id="A1ZAJ2">
    <property type="interactions" value="7"/>
</dbReference>
<dbReference type="STRING" id="7227.FBpp0086227"/>
<dbReference type="iPTMnet" id="A1ZAJ2"/>
<dbReference type="PaxDb" id="7227-FBpp0086227"/>
<dbReference type="EnsemblMetazoa" id="FBtr0087079">
    <molecule id="A1ZAJ2-2"/>
    <property type="protein sequence ID" value="FBpp0086227"/>
    <property type="gene ID" value="FBgn0267002"/>
</dbReference>
<dbReference type="EnsemblMetazoa" id="FBtr0113087">
    <molecule id="A1ZAJ2-1"/>
    <property type="protein sequence ID" value="FBpp0112000"/>
    <property type="gene ID" value="FBgn0267002"/>
</dbReference>
<dbReference type="EnsemblMetazoa" id="FBtr0113088">
    <molecule id="A1ZAJ2-1"/>
    <property type="protein sequence ID" value="FBpp0112001"/>
    <property type="gene ID" value="FBgn0267002"/>
</dbReference>
<dbReference type="EnsemblMetazoa" id="FBtr0113089">
    <molecule id="A1ZAJ2-3"/>
    <property type="protein sequence ID" value="FBpp0112002"/>
    <property type="gene ID" value="FBgn0267002"/>
</dbReference>
<dbReference type="GeneID" id="36876"/>
<dbReference type="KEGG" id="dme:Dmel_CG8566"/>
<dbReference type="UCSC" id="CG8566-RB">
    <molecule id="A1ZAJ2-1"/>
    <property type="organism name" value="d. melanogaster"/>
</dbReference>
<dbReference type="AGR" id="FB:FBgn0267002"/>
<dbReference type="CTD" id="36876"/>
<dbReference type="FlyBase" id="FBgn0267002">
    <property type="gene designation" value="unc-104"/>
</dbReference>
<dbReference type="VEuPathDB" id="VectorBase:FBgn0267002"/>
<dbReference type="eggNOG" id="KOG0245">
    <property type="taxonomic scope" value="Eukaryota"/>
</dbReference>
<dbReference type="GeneTree" id="ENSGT00940000168546"/>
<dbReference type="InParanoid" id="A1ZAJ2"/>
<dbReference type="OMA" id="IKITICH"/>
<dbReference type="OrthoDB" id="3176171at2759"/>
<dbReference type="PhylomeDB" id="A1ZAJ2"/>
<dbReference type="Reactome" id="R-DME-6811434">
    <property type="pathway name" value="COPI-dependent Golgi-to-ER retrograde traffic"/>
</dbReference>
<dbReference type="Reactome" id="R-DME-983189">
    <property type="pathway name" value="Kinesins"/>
</dbReference>
<dbReference type="SignaLink" id="A1ZAJ2"/>
<dbReference type="BioGRID-ORCS" id="36876">
    <property type="hits" value="0 hits in 3 CRISPR screens"/>
</dbReference>
<dbReference type="GenomeRNAi" id="36876"/>
<dbReference type="PRO" id="PR:A1ZAJ2"/>
<dbReference type="Proteomes" id="UP000000803">
    <property type="component" value="Chromosome 2R"/>
</dbReference>
<dbReference type="Bgee" id="FBgn0267002">
    <property type="expression patterns" value="Expressed in mechanosensory neuron (Drosophila) in haltere and 258 other cell types or tissues"/>
</dbReference>
<dbReference type="ExpressionAtlas" id="A1ZAJ2">
    <property type="expression patterns" value="baseline and differential"/>
</dbReference>
<dbReference type="GO" id="GO:0030424">
    <property type="term" value="C:axon"/>
    <property type="evidence" value="ECO:0000314"/>
    <property type="project" value="UniProtKB"/>
</dbReference>
<dbReference type="GO" id="GO:1904115">
    <property type="term" value="C:axon cytoplasm"/>
    <property type="evidence" value="ECO:0007669"/>
    <property type="project" value="GOC"/>
</dbReference>
<dbReference type="GO" id="GO:0043679">
    <property type="term" value="C:axon terminus"/>
    <property type="evidence" value="ECO:0000314"/>
    <property type="project" value="FlyBase"/>
</dbReference>
<dbReference type="GO" id="GO:0005737">
    <property type="term" value="C:cytoplasm"/>
    <property type="evidence" value="ECO:0000318"/>
    <property type="project" value="GO_Central"/>
</dbReference>
<dbReference type="GO" id="GO:0030425">
    <property type="term" value="C:dendrite"/>
    <property type="evidence" value="ECO:0000314"/>
    <property type="project" value="FlyBase"/>
</dbReference>
<dbReference type="GO" id="GO:0005871">
    <property type="term" value="C:kinesin complex"/>
    <property type="evidence" value="ECO:0000318"/>
    <property type="project" value="GO_Central"/>
</dbReference>
<dbReference type="GO" id="GO:0005874">
    <property type="term" value="C:microtubule"/>
    <property type="evidence" value="ECO:0000318"/>
    <property type="project" value="GO_Central"/>
</dbReference>
<dbReference type="GO" id="GO:0005875">
    <property type="term" value="C:microtubule associated complex"/>
    <property type="evidence" value="ECO:0000315"/>
    <property type="project" value="UniProtKB"/>
</dbReference>
<dbReference type="GO" id="GO:0005524">
    <property type="term" value="F:ATP binding"/>
    <property type="evidence" value="ECO:0007669"/>
    <property type="project" value="UniProtKB-KW"/>
</dbReference>
<dbReference type="GO" id="GO:0016887">
    <property type="term" value="F:ATP hydrolysis activity"/>
    <property type="evidence" value="ECO:0000318"/>
    <property type="project" value="GO_Central"/>
</dbReference>
<dbReference type="GO" id="GO:0030742">
    <property type="term" value="F:GTP-dependent protein binding"/>
    <property type="evidence" value="ECO:0000353"/>
    <property type="project" value="UniProtKB"/>
</dbReference>
<dbReference type="GO" id="GO:0008017">
    <property type="term" value="F:microtubule binding"/>
    <property type="evidence" value="ECO:0000318"/>
    <property type="project" value="GO_Central"/>
</dbReference>
<dbReference type="GO" id="GO:0008574">
    <property type="term" value="F:plus-end-directed microtubule motor activity"/>
    <property type="evidence" value="ECO:0000318"/>
    <property type="project" value="GO_Central"/>
</dbReference>
<dbReference type="GO" id="GO:0008089">
    <property type="term" value="P:anterograde axonal transport"/>
    <property type="evidence" value="ECO:0000315"/>
    <property type="project" value="UniProtKB"/>
</dbReference>
<dbReference type="GO" id="GO:0048490">
    <property type="term" value="P:anterograde synaptic vesicle transport"/>
    <property type="evidence" value="ECO:0000315"/>
    <property type="project" value="FlyBase"/>
</dbReference>
<dbReference type="GO" id="GO:0008088">
    <property type="term" value="P:axo-dendritic transport"/>
    <property type="evidence" value="ECO:0000315"/>
    <property type="project" value="FlyBase"/>
</dbReference>
<dbReference type="GO" id="GO:0098930">
    <property type="term" value="P:axonal transport"/>
    <property type="evidence" value="ECO:0000315"/>
    <property type="project" value="FlyBase"/>
</dbReference>
<dbReference type="GO" id="GO:0046847">
    <property type="term" value="P:filopodium assembly"/>
    <property type="evidence" value="ECO:0000315"/>
    <property type="project" value="FlyBase"/>
</dbReference>
<dbReference type="GO" id="GO:0008345">
    <property type="term" value="P:larval locomotory behavior"/>
    <property type="evidence" value="ECO:0000315"/>
    <property type="project" value="FlyBase"/>
</dbReference>
<dbReference type="GO" id="GO:0045886">
    <property type="term" value="P:negative regulation of synaptic assembly at neuromuscular junction"/>
    <property type="evidence" value="ECO:0000315"/>
    <property type="project" value="FlyBase"/>
</dbReference>
<dbReference type="GO" id="GO:0007528">
    <property type="term" value="P:neuromuscular junction development"/>
    <property type="evidence" value="ECO:0000315"/>
    <property type="project" value="FlyBase"/>
</dbReference>
<dbReference type="GO" id="GO:0032024">
    <property type="term" value="P:positive regulation of insulin secretion"/>
    <property type="evidence" value="ECO:0000315"/>
    <property type="project" value="FlyBase"/>
</dbReference>
<dbReference type="GO" id="GO:0015031">
    <property type="term" value="P:protein transport"/>
    <property type="evidence" value="ECO:0007669"/>
    <property type="project" value="UniProtKB-KW"/>
</dbReference>
<dbReference type="GO" id="GO:0048814">
    <property type="term" value="P:regulation of dendrite morphogenesis"/>
    <property type="evidence" value="ECO:0000315"/>
    <property type="project" value="FlyBase"/>
</dbReference>
<dbReference type="GO" id="GO:0040012">
    <property type="term" value="P:regulation of locomotion"/>
    <property type="evidence" value="ECO:0000315"/>
    <property type="project" value="FlyBase"/>
</dbReference>
<dbReference type="GO" id="GO:0051963">
    <property type="term" value="P:regulation of synapse assembly"/>
    <property type="evidence" value="ECO:0000315"/>
    <property type="project" value="FlyBase"/>
</dbReference>
<dbReference type="GO" id="GO:1990049">
    <property type="term" value="P:retrograde neuronal dense core vesicle transport"/>
    <property type="evidence" value="ECO:0000318"/>
    <property type="project" value="GO_Central"/>
</dbReference>
<dbReference type="GO" id="GO:0016188">
    <property type="term" value="P:synaptic vesicle maturation"/>
    <property type="evidence" value="ECO:0000315"/>
    <property type="project" value="FlyBase"/>
</dbReference>
<dbReference type="GO" id="GO:0048489">
    <property type="term" value="P:synaptic vesicle transport"/>
    <property type="evidence" value="ECO:0000315"/>
    <property type="project" value="UniProtKB"/>
</dbReference>
<dbReference type="GO" id="GO:0047496">
    <property type="term" value="P:vesicle transport along microtubule"/>
    <property type="evidence" value="ECO:0000315"/>
    <property type="project" value="UniProtKB"/>
</dbReference>
<dbReference type="GO" id="GO:0016192">
    <property type="term" value="P:vesicle-mediated transport"/>
    <property type="evidence" value="ECO:0000315"/>
    <property type="project" value="FlyBase"/>
</dbReference>
<dbReference type="CDD" id="cd22705">
    <property type="entry name" value="FHA_KIF1"/>
    <property type="match status" value="1"/>
</dbReference>
<dbReference type="CDD" id="cd01365">
    <property type="entry name" value="KISc_KIF1A_KIF1B"/>
    <property type="match status" value="1"/>
</dbReference>
<dbReference type="CDD" id="cd01233">
    <property type="entry name" value="PH_KIFIA_KIFIB"/>
    <property type="match status" value="1"/>
</dbReference>
<dbReference type="FunFam" id="2.60.200.20:FF:000001">
    <property type="entry name" value="Kinesin family member 1B"/>
    <property type="match status" value="1"/>
</dbReference>
<dbReference type="FunFam" id="3.40.850.10:FF:000004">
    <property type="entry name" value="Kinesin-like protein isoform 2"/>
    <property type="match status" value="1"/>
</dbReference>
<dbReference type="FunFam" id="2.30.29.30:FF:000204">
    <property type="entry name" value="kinesin-like protein unc-104 isoform X6"/>
    <property type="match status" value="1"/>
</dbReference>
<dbReference type="Gene3D" id="2.60.200.20">
    <property type="match status" value="1"/>
</dbReference>
<dbReference type="Gene3D" id="6.10.250.2520">
    <property type="match status" value="1"/>
</dbReference>
<dbReference type="Gene3D" id="3.40.850.10">
    <property type="entry name" value="Kinesin motor domain"/>
    <property type="match status" value="1"/>
</dbReference>
<dbReference type="Gene3D" id="2.30.29.30">
    <property type="entry name" value="Pleckstrin-homology domain (PH domain)/Phosphotyrosine-binding domain (PTB)"/>
    <property type="match status" value="1"/>
</dbReference>
<dbReference type="InterPro" id="IPR000253">
    <property type="entry name" value="FHA_dom"/>
</dbReference>
<dbReference type="InterPro" id="IPR022164">
    <property type="entry name" value="Kinesin-like"/>
</dbReference>
<dbReference type="InterPro" id="IPR022140">
    <property type="entry name" value="Kinesin-like_KIF1-typ"/>
</dbReference>
<dbReference type="InterPro" id="IPR032405">
    <property type="entry name" value="Kinesin_assoc"/>
</dbReference>
<dbReference type="InterPro" id="IPR019821">
    <property type="entry name" value="Kinesin_motor_CS"/>
</dbReference>
<dbReference type="InterPro" id="IPR001752">
    <property type="entry name" value="Kinesin_motor_dom"/>
</dbReference>
<dbReference type="InterPro" id="IPR036961">
    <property type="entry name" value="Kinesin_motor_dom_sf"/>
</dbReference>
<dbReference type="InterPro" id="IPR027417">
    <property type="entry name" value="P-loop_NTPase"/>
</dbReference>
<dbReference type="InterPro" id="IPR011993">
    <property type="entry name" value="PH-like_dom_sf"/>
</dbReference>
<dbReference type="InterPro" id="IPR001849">
    <property type="entry name" value="PH_domain"/>
</dbReference>
<dbReference type="InterPro" id="IPR049780">
    <property type="entry name" value="PH_KIFIA_KIFIB"/>
</dbReference>
<dbReference type="InterPro" id="IPR008984">
    <property type="entry name" value="SMAD_FHA_dom_sf"/>
</dbReference>
<dbReference type="PANTHER" id="PTHR47117:SF9">
    <property type="entry name" value="KINESIN-LIKE PROTEIN KIF1C ISOFORM X1"/>
    <property type="match status" value="1"/>
</dbReference>
<dbReference type="PANTHER" id="PTHR47117">
    <property type="entry name" value="STAR-RELATED LIPID TRANSFER PROTEIN 9"/>
    <property type="match status" value="1"/>
</dbReference>
<dbReference type="Pfam" id="PF12473">
    <property type="entry name" value="DUF3694"/>
    <property type="match status" value="1"/>
</dbReference>
<dbReference type="Pfam" id="PF00498">
    <property type="entry name" value="FHA"/>
    <property type="match status" value="1"/>
</dbReference>
<dbReference type="Pfam" id="PF12423">
    <property type="entry name" value="KIF1B"/>
    <property type="match status" value="1"/>
</dbReference>
<dbReference type="Pfam" id="PF00225">
    <property type="entry name" value="Kinesin"/>
    <property type="match status" value="1"/>
</dbReference>
<dbReference type="Pfam" id="PF16183">
    <property type="entry name" value="Kinesin_assoc"/>
    <property type="match status" value="1"/>
</dbReference>
<dbReference type="Pfam" id="PF00169">
    <property type="entry name" value="PH"/>
    <property type="match status" value="1"/>
</dbReference>
<dbReference type="PRINTS" id="PR00380">
    <property type="entry name" value="KINESINHEAVY"/>
</dbReference>
<dbReference type="SMART" id="SM00240">
    <property type="entry name" value="FHA"/>
    <property type="match status" value="1"/>
</dbReference>
<dbReference type="SMART" id="SM00129">
    <property type="entry name" value="KISc"/>
    <property type="match status" value="1"/>
</dbReference>
<dbReference type="SMART" id="SM00233">
    <property type="entry name" value="PH"/>
    <property type="match status" value="1"/>
</dbReference>
<dbReference type="SUPFAM" id="SSF52540">
    <property type="entry name" value="P-loop containing nucleoside triphosphate hydrolases"/>
    <property type="match status" value="1"/>
</dbReference>
<dbReference type="SUPFAM" id="SSF50729">
    <property type="entry name" value="PH domain-like"/>
    <property type="match status" value="1"/>
</dbReference>
<dbReference type="SUPFAM" id="SSF49879">
    <property type="entry name" value="SMAD/FHA domain"/>
    <property type="match status" value="1"/>
</dbReference>
<dbReference type="PROSITE" id="PS00411">
    <property type="entry name" value="KINESIN_MOTOR_1"/>
    <property type="match status" value="1"/>
</dbReference>
<dbReference type="PROSITE" id="PS50067">
    <property type="entry name" value="KINESIN_MOTOR_2"/>
    <property type="match status" value="1"/>
</dbReference>
<dbReference type="PROSITE" id="PS50003">
    <property type="entry name" value="PH_DOMAIN"/>
    <property type="match status" value="1"/>
</dbReference>
<sequence>MSSVKVAVRVRPFNSREIARESKCIIEMAGATTAITNPKVPPNTSDSVKRFNFDYSYWSHDHHDADFSTQSMVYKDIGEEMLQHSFDGYNVCIFAYGQTGAGKSYTMMGRQEEQQEGIIPMICKDLFTRIQDTETDDLKYSVEVSYMEIYCERVRDLLNPKNKGNLRVREHPLLGPYVEDLSKLAVTDYQDIHDLIDEGNKARTVAATNMNETSSRSHAVFTIFFTQRRHDLMTNLTTEKVSKISLVDLAGSERADSTGAKGTRLKEGANINKSLTTLGKVISALAEVASKKKNTKKADFIPYRDSALTWLLRENLGGNSKTAMIAAISPADINYDETLSTLRYADRAKQIVCKAVVNEDANAKLIRELKEEIQKLRDLLKAEGIEVQEEDELTKSTVIKSPTKSRNRNGSTTEMAVDQLQASEKLIAELNETWEEKLKRTEEIRVQREAVFAEMGVAVKEDGITVGVFSPKKTPHLVNLNEDPNLSECLLYYIKEGLTRLGTHEANVPQDIQLSGSHILKEHCTFENKNSTVTLLPHKDAIIYVNGRKLVEPEVLKTGSRVILGKNHVFRFTNPEQARELRDKIETENEAENEVEKTDTQQVDWNFAQCELLEKQGIDLKAEMKKRLDNLEEQYKREKLQADQQFEEQRKTYEARIDALQKQVEEQSMTMSMYSSYSPEDFHQEEDVYTNPMYESCWTAREAGLAAWAFRKWRYHQFTSLRDDLWGNAIFLKEANAISVELKKKVQFQFTLLTDTLYSPLPPELASTVAPVHQEDEFGAPPVSKTLVAVEVTDTKNGATHHWSLEKLRQRLELMREMYHNEAEMSPTSPDYNVESLTGGDPFYDRFPWFRMVGRSFIYLSNLLYPVPLVHKVAIVNERGDVRGYLRIAVQPVLDEESIDFNNGVKQSARLVFNEDDAKPKYRALNEKDDVQRYIDNGGLDSKLEELEDVDSGRGIDSNSASECHENSEEPGEHLQVGKEFTFRVTVLQATGIGAEYADIFCQFNFLHRHEEAFSTEPVKNSASGAPLGFYHVQNITVPVTKSFIEYLKTQPIMFKIFGHYQTHPLHKDAKQDFVSRPPPRRMLPPSIPISQPVRSPKFGPLPCAPTSTVLAKHDVLVWFEICELAPNGEYVPSVVEHSDDLPCRGLFLLHQGIQRRIRITIVHEPTTEVKWKDINELVVGRIRNTPESSDEQDEDACVLSLGLFPGEALEVPGDDRSFYRFEAAWDSSLHNSALLNRVSQGGETIYITLSAYLELENCARPAIITKDLSMVIYGRDARTGPRSLKHLFSGQYRNPEANRLTGVYELALRRASEAGSPGVQRRQRRVLDTSSTYVRGEENLHGWRPRGDSLIFDHQWELEKLTRLEEVGRMRHLLLLRERLGMDTNPNPTTKTEKDVCNLAARAATSPVHMVIPQSPQTPVKDPQQIIPEREYNQREQDLMLKCLKLVQGRYTKSEANDTQTQSDVSPSDEGCADMTVSCISSNSMENNKFVIRRRLCSPDRADAPNGWEAPAPATQPALPLRLYVPELEEIRVSPVVARKGLLNVLEHGGSGWKKRWVIVRRPYVFIYRSEKDPVERAVLNLATAHVECSEDQAAMVKIPNTFSVVTKHRGYLLQTLGDKEVHDWLYAINPLLAGQIKSRLARRTLEPASQTASQIQATNAANANSASK</sequence>
<proteinExistence type="evidence at protein level"/>
<name>KIF1A_DROME</name>
<keyword id="KW-0025">Alternative splicing</keyword>
<keyword id="KW-0067">ATP-binding</keyword>
<keyword id="KW-0966">Cell projection</keyword>
<keyword id="KW-0175">Coiled coil</keyword>
<keyword id="KW-0963">Cytoplasm</keyword>
<keyword id="KW-0206">Cytoskeleton</keyword>
<keyword id="KW-0493">Microtubule</keyword>
<keyword id="KW-0505">Motor protein</keyword>
<keyword id="KW-0547">Nucleotide-binding</keyword>
<keyword id="KW-0597">Phosphoprotein</keyword>
<keyword id="KW-0653">Protein transport</keyword>
<keyword id="KW-1185">Reference proteome</keyword>
<keyword id="KW-0813">Transport</keyword>
<accession>A1ZAJ2</accession>
<accession>A8DX00</accession>
<accession>A8DYG5</accession>
<accession>Q9NBL1</accession>
<feature type="chain" id="PRO_0000299496" description="Kinesin-like protein unc-104">
    <location>
        <begin position="1"/>
        <end position="1670"/>
    </location>
</feature>
<feature type="domain" description="Kinesin motor" evidence="4">
    <location>
        <begin position="3"/>
        <end position="351"/>
    </location>
</feature>
<feature type="domain" description="FHA" evidence="2">
    <location>
        <begin position="499"/>
        <end position="565"/>
    </location>
</feature>
<feature type="domain" description="PH" evidence="3">
    <location>
        <begin position="1537"/>
        <end position="1635"/>
    </location>
</feature>
<feature type="region of interest" description="Disordered" evidence="5">
    <location>
        <begin position="951"/>
        <end position="975"/>
    </location>
</feature>
<feature type="coiled-coil region" evidence="2">
    <location>
        <begin position="358"/>
        <end position="436"/>
    </location>
</feature>
<feature type="coiled-coil region" evidence="2">
    <location>
        <begin position="576"/>
        <end position="674"/>
    </location>
</feature>
<feature type="compositionally biased region" description="Basic and acidic residues" evidence="5">
    <location>
        <begin position="963"/>
        <end position="975"/>
    </location>
</feature>
<feature type="binding site" evidence="4">
    <location>
        <begin position="97"/>
        <end position="104"/>
    </location>
    <ligand>
        <name>ATP</name>
        <dbReference type="ChEBI" id="CHEBI:30616"/>
    </ligand>
</feature>
<feature type="modified residue" description="Phosphothreonine" evidence="7">
    <location>
        <position position="1406"/>
    </location>
</feature>
<feature type="modified residue" description="Phosphoserine" evidence="7">
    <location>
        <position position="1416"/>
    </location>
</feature>
<feature type="modified residue" description="Phosphothreonine" evidence="7">
    <location>
        <position position="1419"/>
    </location>
</feature>
<feature type="splice variant" id="VSP_030268" description="In isoform E." evidence="10">
    <original>E</original>
    <variation>GPDGKVVCEKRDANK</variation>
    <location>
        <position position="390"/>
    </location>
</feature>
<feature type="splice variant" id="VSP_030269" description="In isoform D." evidence="10">
    <original>R</original>
    <variation>RYRLELMRQIYNVESPPSSMLFDTSGMEALSGWISPPSQHPGQQAQLLPLEPPVESERGRLTLANLIPSR</variation>
    <location>
        <position position="809"/>
    </location>
</feature>
<feature type="sequence conflict" description="In Ref. 1; AAF74192." evidence="10" ref="1">
    <original>V</original>
    <variation>VS</variation>
    <location>
        <position position="288"/>
    </location>
</feature>
<reference evidence="11" key="1">
    <citation type="submission" date="2000-03" db="EMBL/GenBank/DDBJ databases">
        <title>Characterization of the Drosophila Unc104/KIF1A homolog, DUnc104.</title>
        <authorList>
            <person name="Grossberger R."/>
            <person name="Saxton W.M."/>
            <person name="Dickson B.J."/>
        </authorList>
    </citation>
    <scope>NUCLEOTIDE SEQUENCE [MRNA] (ISOFORM B)</scope>
</reference>
<reference key="2">
    <citation type="journal article" date="2000" name="Science">
        <title>The genome sequence of Drosophila melanogaster.</title>
        <authorList>
            <person name="Adams M.D."/>
            <person name="Celniker S.E."/>
            <person name="Holt R.A."/>
            <person name="Evans C.A."/>
            <person name="Gocayne J.D."/>
            <person name="Amanatides P.G."/>
            <person name="Scherer S.E."/>
            <person name="Li P.W."/>
            <person name="Hoskins R.A."/>
            <person name="Galle R.F."/>
            <person name="George R.A."/>
            <person name="Lewis S.E."/>
            <person name="Richards S."/>
            <person name="Ashburner M."/>
            <person name="Henderson S.N."/>
            <person name="Sutton G.G."/>
            <person name="Wortman J.R."/>
            <person name="Yandell M.D."/>
            <person name="Zhang Q."/>
            <person name="Chen L.X."/>
            <person name="Brandon R.C."/>
            <person name="Rogers Y.-H.C."/>
            <person name="Blazej R.G."/>
            <person name="Champe M."/>
            <person name="Pfeiffer B.D."/>
            <person name="Wan K.H."/>
            <person name="Doyle C."/>
            <person name="Baxter E.G."/>
            <person name="Helt G."/>
            <person name="Nelson C.R."/>
            <person name="Miklos G.L.G."/>
            <person name="Abril J.F."/>
            <person name="Agbayani A."/>
            <person name="An H.-J."/>
            <person name="Andrews-Pfannkoch C."/>
            <person name="Baldwin D."/>
            <person name="Ballew R.M."/>
            <person name="Basu A."/>
            <person name="Baxendale J."/>
            <person name="Bayraktaroglu L."/>
            <person name="Beasley E.M."/>
            <person name="Beeson K.Y."/>
            <person name="Benos P.V."/>
            <person name="Berman B.P."/>
            <person name="Bhandari D."/>
            <person name="Bolshakov S."/>
            <person name="Borkova D."/>
            <person name="Botchan M.R."/>
            <person name="Bouck J."/>
            <person name="Brokstein P."/>
            <person name="Brottier P."/>
            <person name="Burtis K.C."/>
            <person name="Busam D.A."/>
            <person name="Butler H."/>
            <person name="Cadieu E."/>
            <person name="Center A."/>
            <person name="Chandra I."/>
            <person name="Cherry J.M."/>
            <person name="Cawley S."/>
            <person name="Dahlke C."/>
            <person name="Davenport L.B."/>
            <person name="Davies P."/>
            <person name="de Pablos B."/>
            <person name="Delcher A."/>
            <person name="Deng Z."/>
            <person name="Mays A.D."/>
            <person name="Dew I."/>
            <person name="Dietz S.M."/>
            <person name="Dodson K."/>
            <person name="Doup L.E."/>
            <person name="Downes M."/>
            <person name="Dugan-Rocha S."/>
            <person name="Dunkov B.C."/>
            <person name="Dunn P."/>
            <person name="Durbin K.J."/>
            <person name="Evangelista C.C."/>
            <person name="Ferraz C."/>
            <person name="Ferriera S."/>
            <person name="Fleischmann W."/>
            <person name="Fosler C."/>
            <person name="Gabrielian A.E."/>
            <person name="Garg N.S."/>
            <person name="Gelbart W.M."/>
            <person name="Glasser K."/>
            <person name="Glodek A."/>
            <person name="Gong F."/>
            <person name="Gorrell J.H."/>
            <person name="Gu Z."/>
            <person name="Guan P."/>
            <person name="Harris M."/>
            <person name="Harris N.L."/>
            <person name="Harvey D.A."/>
            <person name="Heiman T.J."/>
            <person name="Hernandez J.R."/>
            <person name="Houck J."/>
            <person name="Hostin D."/>
            <person name="Houston K.A."/>
            <person name="Howland T.J."/>
            <person name="Wei M.-H."/>
            <person name="Ibegwam C."/>
            <person name="Jalali M."/>
            <person name="Kalush F."/>
            <person name="Karpen G.H."/>
            <person name="Ke Z."/>
            <person name="Kennison J.A."/>
            <person name="Ketchum K.A."/>
            <person name="Kimmel B.E."/>
            <person name="Kodira C.D."/>
            <person name="Kraft C.L."/>
            <person name="Kravitz S."/>
            <person name="Kulp D."/>
            <person name="Lai Z."/>
            <person name="Lasko P."/>
            <person name="Lei Y."/>
            <person name="Levitsky A.A."/>
            <person name="Li J.H."/>
            <person name="Li Z."/>
            <person name="Liang Y."/>
            <person name="Lin X."/>
            <person name="Liu X."/>
            <person name="Mattei B."/>
            <person name="McIntosh T.C."/>
            <person name="McLeod M.P."/>
            <person name="McPherson D."/>
            <person name="Merkulov G."/>
            <person name="Milshina N.V."/>
            <person name="Mobarry C."/>
            <person name="Morris J."/>
            <person name="Moshrefi A."/>
            <person name="Mount S.M."/>
            <person name="Moy M."/>
            <person name="Murphy B."/>
            <person name="Murphy L."/>
            <person name="Muzny D.M."/>
            <person name="Nelson D.L."/>
            <person name="Nelson D.R."/>
            <person name="Nelson K.A."/>
            <person name="Nixon K."/>
            <person name="Nusskern D.R."/>
            <person name="Pacleb J.M."/>
            <person name="Palazzolo M."/>
            <person name="Pittman G.S."/>
            <person name="Pan S."/>
            <person name="Pollard J."/>
            <person name="Puri V."/>
            <person name="Reese M.G."/>
            <person name="Reinert K."/>
            <person name="Remington K."/>
            <person name="Saunders R.D.C."/>
            <person name="Scheeler F."/>
            <person name="Shen H."/>
            <person name="Shue B.C."/>
            <person name="Siden-Kiamos I."/>
            <person name="Simpson M."/>
            <person name="Skupski M.P."/>
            <person name="Smith T.J."/>
            <person name="Spier E."/>
            <person name="Spradling A.C."/>
            <person name="Stapleton M."/>
            <person name="Strong R."/>
            <person name="Sun E."/>
            <person name="Svirskas R."/>
            <person name="Tector C."/>
            <person name="Turner R."/>
            <person name="Venter E."/>
            <person name="Wang A.H."/>
            <person name="Wang X."/>
            <person name="Wang Z.-Y."/>
            <person name="Wassarman D.A."/>
            <person name="Weinstock G.M."/>
            <person name="Weissenbach J."/>
            <person name="Williams S.M."/>
            <person name="Woodage T."/>
            <person name="Worley K.C."/>
            <person name="Wu D."/>
            <person name="Yang S."/>
            <person name="Yao Q.A."/>
            <person name="Ye J."/>
            <person name="Yeh R.-F."/>
            <person name="Zaveri J.S."/>
            <person name="Zhan M."/>
            <person name="Zhang G."/>
            <person name="Zhao Q."/>
            <person name="Zheng L."/>
            <person name="Zheng X.H."/>
            <person name="Zhong F.N."/>
            <person name="Zhong W."/>
            <person name="Zhou X."/>
            <person name="Zhu S.C."/>
            <person name="Zhu X."/>
            <person name="Smith H.O."/>
            <person name="Gibbs R.A."/>
            <person name="Myers E.W."/>
            <person name="Rubin G.M."/>
            <person name="Venter J.C."/>
        </authorList>
    </citation>
    <scope>NUCLEOTIDE SEQUENCE [LARGE SCALE GENOMIC DNA]</scope>
    <source>
        <strain>Berkeley</strain>
    </source>
</reference>
<reference evidence="10" key="3">
    <citation type="journal article" date="2002" name="Genome Biol.">
        <title>Annotation of the Drosophila melanogaster euchromatic genome: a systematic review.</title>
        <authorList>
            <person name="Misra S."/>
            <person name="Crosby M.A."/>
            <person name="Mungall C.J."/>
            <person name="Matthews B.B."/>
            <person name="Campbell K.S."/>
            <person name="Hradecky P."/>
            <person name="Huang Y."/>
            <person name="Kaminker J.S."/>
            <person name="Millburn G.H."/>
            <person name="Prochnik S.E."/>
            <person name="Smith C.D."/>
            <person name="Tupy J.L."/>
            <person name="Whitfield E.J."/>
            <person name="Bayraktaroglu L."/>
            <person name="Berman B.P."/>
            <person name="Bettencourt B.R."/>
            <person name="Celniker S.E."/>
            <person name="de Grey A.D.N.J."/>
            <person name="Drysdale R.A."/>
            <person name="Harris N.L."/>
            <person name="Richter J."/>
            <person name="Russo S."/>
            <person name="Schroeder A.J."/>
            <person name="Shu S.Q."/>
            <person name="Stapleton M."/>
            <person name="Yamada C."/>
            <person name="Ashburner M."/>
            <person name="Gelbart W.M."/>
            <person name="Rubin G.M."/>
            <person name="Lewis S.E."/>
        </authorList>
    </citation>
    <scope>GENOME REANNOTATION</scope>
    <scope>ALTERNATIVE SPLICING</scope>
    <source>
        <strain>Berkeley</strain>
    </source>
</reference>
<reference evidence="10" key="4">
    <citation type="journal article" date="2007" name="Nat. Neurosci.">
        <title>A Drosophila kinesin required for synaptic bouton formation and synaptic vesicle transport.</title>
        <authorList>
            <person name="Pack-Chung E."/>
            <person name="Kurshan P.T."/>
            <person name="Dickman D.K."/>
            <person name="Schwarz T.L."/>
        </authorList>
    </citation>
    <scope>FUNCTION</scope>
    <scope>SUBCELLULAR LOCATION</scope>
    <scope>TISSUE SPECIFICITY</scope>
    <scope>DISRUPTION PHENOTYPE</scope>
</reference>
<reference key="5">
    <citation type="journal article" date="2008" name="J. Proteome Res.">
        <title>Phosphoproteome analysis of Drosophila melanogaster embryos.</title>
        <authorList>
            <person name="Zhai B."/>
            <person name="Villen J."/>
            <person name="Beausoleil S.A."/>
            <person name="Mintseris J."/>
            <person name="Gygi S.P."/>
        </authorList>
    </citation>
    <scope>PHOSPHORYLATION [LARGE SCALE ANALYSIS] AT THR-1406; SER-1416 AND THR-1419</scope>
    <scope>IDENTIFICATION BY MASS SPECTROMETRY</scope>
    <source>
        <tissue>Embryo</tissue>
    </source>
</reference>
<reference key="6">
    <citation type="journal article" date="2018" name="Neuron">
        <title>Presynaptic Biogenesis Requires Axonal Transport of Lysosome-Related Vesicles.</title>
        <authorList>
            <person name="Vukoja A."/>
            <person name="Rey U."/>
            <person name="Petzoldt A.G."/>
            <person name="Ott C."/>
            <person name="Vollweiter D."/>
            <person name="Quentin C."/>
            <person name="Puchkov D."/>
            <person name="Reynolds E."/>
            <person name="Lehmann M."/>
            <person name="Hohensee S."/>
            <person name="Rosa S."/>
            <person name="Lipowsky R."/>
            <person name="Sigrist S.J."/>
            <person name="Haucke V."/>
        </authorList>
    </citation>
    <scope>FUNCTION</scope>
    <scope>INTERACTION WITH ARL8</scope>
    <scope>SUBCELLULAR LOCATION</scope>
</reference>